<name>HIMC_ASPJA</name>
<keyword id="KW-0325">Glycoprotein</keyword>
<keyword id="KW-0349">Heme</keyword>
<keyword id="KW-0408">Iron</keyword>
<keyword id="KW-0472">Membrane</keyword>
<keyword id="KW-0479">Metal-binding</keyword>
<keyword id="KW-0503">Monooxygenase</keyword>
<keyword id="KW-0560">Oxidoreductase</keyword>
<keyword id="KW-0812">Transmembrane</keyword>
<keyword id="KW-1133">Transmembrane helix</keyword>
<evidence type="ECO:0000250" key="1">
    <source>
        <dbReference type="UniProtKB" id="P04798"/>
    </source>
</evidence>
<evidence type="ECO:0000255" key="2"/>
<evidence type="ECO:0000255" key="3">
    <source>
        <dbReference type="PROSITE-ProRule" id="PRU00498"/>
    </source>
</evidence>
<evidence type="ECO:0000269" key="4">
    <source>
    </source>
</evidence>
<evidence type="ECO:0000269" key="5">
    <source>
    </source>
</evidence>
<evidence type="ECO:0000303" key="6">
    <source>
    </source>
</evidence>
<evidence type="ECO:0000305" key="7"/>
<evidence type="ECO:0000305" key="8">
    <source>
    </source>
</evidence>
<gene>
    <name evidence="6" type="primary">himC</name>
</gene>
<proteinExistence type="inferred from homology"/>
<sequence>MEDIVNRLYAFDWRSLSLGSVPAPTPAPAPQSSVVHHLIAWWDQSKDSMQQYSVASVAIAGFTALVVSVALYRALFSQRQRHDPLNQGCQPLRMYPHKDRIFGLDFVYQNVTTFRRHKYLETLKNRYQTLGTTYGVRVFNRRGILTSDPENIKTILSTRFKDYSLGNRVPIMGPLLGRGIFVSDGQDWSHSRALLRPNFVKEQVADLQMIETHLAQLLKLIPSDGRTVVELQDLFLRFTLDSATDFLFGHSLHTLSRGTAKDQQFGQAFALALDDIALQFRLGPWRALRRPNKDALAAYEICRGYVEGFVADAMAYRHGKASSTGDKNTSDRSYFLKELAQATDDRDRIRDELLNILIAGRDTTASLLGSLFYVLARHPEVWQKLRSEAATQLQGAAPNYEQLRNLQYTRHCINETLRLYPPVPNNTKMAVCDTILPRGGGPKGDAPVFVPKGCTMIYTVYAMHRRTDLFGPDAEEFRPERWATQRFSWEFLPFNGGPRICLGQQYALTEAMYVLVRFAQTFQTIEAQDPAPWTEQLTLTLASNNGVKVRLKGA</sequence>
<accession>A0A2Z5TMB8</accession>
<dbReference type="EC" id="1.-.-.-" evidence="8"/>
<dbReference type="EMBL" id="LC331673">
    <property type="protein sequence ID" value="BBA91558.1"/>
    <property type="molecule type" value="Genomic_DNA"/>
</dbReference>
<dbReference type="SMR" id="A0A2Z5TMB8"/>
<dbReference type="GlyCosmos" id="A0A2Z5TMB8">
    <property type="glycosylation" value="4 sites, No reported glycans"/>
</dbReference>
<dbReference type="GO" id="GO:0016020">
    <property type="term" value="C:membrane"/>
    <property type="evidence" value="ECO:0007669"/>
    <property type="project" value="UniProtKB-SubCell"/>
</dbReference>
<dbReference type="GO" id="GO:0020037">
    <property type="term" value="F:heme binding"/>
    <property type="evidence" value="ECO:0007669"/>
    <property type="project" value="InterPro"/>
</dbReference>
<dbReference type="GO" id="GO:0005506">
    <property type="term" value="F:iron ion binding"/>
    <property type="evidence" value="ECO:0007669"/>
    <property type="project" value="InterPro"/>
</dbReference>
<dbReference type="GO" id="GO:0016712">
    <property type="term" value="F:oxidoreductase activity, acting on paired donors, with incorporation or reduction of molecular oxygen, reduced flavin or flavoprotein as one donor, and incorporation of one atom of oxygen"/>
    <property type="evidence" value="ECO:0007669"/>
    <property type="project" value="InterPro"/>
</dbReference>
<dbReference type="CDD" id="cd11063">
    <property type="entry name" value="CYP52"/>
    <property type="match status" value="1"/>
</dbReference>
<dbReference type="Gene3D" id="1.10.630.10">
    <property type="entry name" value="Cytochrome P450"/>
    <property type="match status" value="1"/>
</dbReference>
<dbReference type="InterPro" id="IPR001128">
    <property type="entry name" value="Cyt_P450"/>
</dbReference>
<dbReference type="InterPro" id="IPR017972">
    <property type="entry name" value="Cyt_P450_CS"/>
</dbReference>
<dbReference type="InterPro" id="IPR002974">
    <property type="entry name" value="Cyt_P450_E_CYP52_ascomycetes"/>
</dbReference>
<dbReference type="InterPro" id="IPR047146">
    <property type="entry name" value="Cyt_P450_E_CYP52_fungi"/>
</dbReference>
<dbReference type="InterPro" id="IPR002402">
    <property type="entry name" value="Cyt_P450_E_grp-II"/>
</dbReference>
<dbReference type="InterPro" id="IPR036396">
    <property type="entry name" value="Cyt_P450_sf"/>
</dbReference>
<dbReference type="PANTHER" id="PTHR24287">
    <property type="entry name" value="P450, PUTATIVE (EUROFUNG)-RELATED"/>
    <property type="match status" value="1"/>
</dbReference>
<dbReference type="PANTHER" id="PTHR24287:SF17">
    <property type="entry name" value="P450, PUTATIVE (EUROFUNG)-RELATED"/>
    <property type="match status" value="1"/>
</dbReference>
<dbReference type="Pfam" id="PF00067">
    <property type="entry name" value="p450"/>
    <property type="match status" value="1"/>
</dbReference>
<dbReference type="PRINTS" id="PR00464">
    <property type="entry name" value="EP450II"/>
</dbReference>
<dbReference type="PRINTS" id="PR01239">
    <property type="entry name" value="EP450IICYP52"/>
</dbReference>
<dbReference type="PRINTS" id="PR00385">
    <property type="entry name" value="P450"/>
</dbReference>
<dbReference type="SUPFAM" id="SSF48264">
    <property type="entry name" value="Cytochrome P450"/>
    <property type="match status" value="1"/>
</dbReference>
<dbReference type="PROSITE" id="PS00086">
    <property type="entry name" value="CYTOCHROME_P450"/>
    <property type="match status" value="1"/>
</dbReference>
<organism>
    <name type="scientific">Aspergillus japonicus</name>
    <dbReference type="NCBI Taxonomy" id="34381"/>
    <lineage>
        <taxon>Eukaryota</taxon>
        <taxon>Fungi</taxon>
        <taxon>Dikarya</taxon>
        <taxon>Ascomycota</taxon>
        <taxon>Pezizomycotina</taxon>
        <taxon>Eurotiomycetes</taxon>
        <taxon>Eurotiomycetidae</taxon>
        <taxon>Eurotiales</taxon>
        <taxon>Aspergillaceae</taxon>
        <taxon>Aspergillus</taxon>
        <taxon>Aspergillus subgen. Circumdati</taxon>
    </lineage>
</organism>
<reference key="1">
    <citation type="journal article" date="2018" name="ChemBioChem">
        <title>Identification of the biosynthetic gene cluster for himeic acid A: a ubiquitin-activating enzyme (E1) inhibitor in Aspergillus japonicus MF275.</title>
        <authorList>
            <person name="Hashimoto M."/>
            <person name="Kato H."/>
            <person name="Katsuki A."/>
            <person name="Tsukamoto S."/>
            <person name="Fujii I."/>
        </authorList>
    </citation>
    <scope>NUCLEOTIDE SEQUENCE [GENOMIC DNA]</scope>
    <scope>FUNCTION</scope>
    <scope>PATHWAY</scope>
    <source>
        <strain>MF275</strain>
    </source>
</reference>
<reference key="2">
    <citation type="journal article" date="2018" name="Bioorg. Med. Chem.">
        <title>pH-dependent production of himeic acid A and its non-enzymatic conversions to himeic acids B and C.</title>
        <authorList>
            <person name="Katsuki A."/>
            <person name="Kato H."/>
            <person name="Tahara Y."/>
            <person name="Hashimoto M."/>
            <person name="Fujii I."/>
            <person name="Tsukamoto S."/>
        </authorList>
    </citation>
    <scope>FUNCTION</scope>
</reference>
<protein>
    <recommendedName>
        <fullName evidence="6">Cytochrome P450 monooxygenase himC</fullName>
        <ecNumber evidence="8">1.-.-.-</ecNumber>
    </recommendedName>
    <alternativeName>
        <fullName evidence="6">Himeic acid A biosynthesis cluster protein C</fullName>
    </alternativeName>
</protein>
<feature type="chain" id="PRO_0000445944" description="Cytochrome P450 monooxygenase himC">
    <location>
        <begin position="1"/>
        <end position="554"/>
    </location>
</feature>
<feature type="transmembrane region" description="Helical" evidence="2">
    <location>
        <begin position="52"/>
        <end position="72"/>
    </location>
</feature>
<feature type="binding site" description="axial binding residue" evidence="1">
    <location>
        <position position="501"/>
    </location>
    <ligand>
        <name>heme</name>
        <dbReference type="ChEBI" id="CHEBI:30413"/>
    </ligand>
    <ligandPart>
        <name>Fe</name>
        <dbReference type="ChEBI" id="CHEBI:18248"/>
    </ligandPart>
</feature>
<feature type="glycosylation site" description="N-linked (GlcNAc...) asparagine" evidence="3">
    <location>
        <position position="110"/>
    </location>
</feature>
<feature type="glycosylation site" description="N-linked (GlcNAc...) asparagine" evidence="3">
    <location>
        <position position="328"/>
    </location>
</feature>
<feature type="glycosylation site" description="N-linked (GlcNAc...) asparagine" evidence="3">
    <location>
        <position position="414"/>
    </location>
</feature>
<feature type="glycosylation site" description="N-linked (GlcNAc...) asparagine" evidence="3">
    <location>
        <position position="425"/>
    </location>
</feature>
<comment type="function">
    <text evidence="4 5 8">Cytochrome P450 monooxygenase; part of the him gene cluster that mediates the biosynthesis of himeic acid A, a ubiquitin-activating enzyme (E1) inhibitor (PubMed:29314577). First, himA, together with the trans-enoyl reductase himH, catalyzes the formation of apolyketide chain, which is then condensed with leucine by the NRPS activity of himA. Dieckmann cyclization and release from himA gives a tetramic acid intermediate as the product of himA PKS-NRPS (PubMed:29314577). HimG then catalyzes alpha-oxidation of the tetramic acid ring, with a subsequent rearrangement to yield apyrone intermediate (Probable). Two terminal methyl groups of polyketide and amide side chains are oxidized to carboxylic acids by himC cytochrome P450 monooxygenase to form himeic acid A (Probable). Himeic acid A is further converted to himeic acid B and C during culture growth. No gene responsible for pyrone to pyridone conversion was found in the him gene cluster and himeic acid A is non-enzymatically converted to himeic acid C by the incorporation of an ammonium nitrogen atom in a pH5 buffer, and to himeic acid B at a conversion ratio of 50% during incubation in MeOH for 5 days (PubMed:29486950).</text>
</comment>
<comment type="cofactor">
    <cofactor evidence="1">
        <name>heme</name>
        <dbReference type="ChEBI" id="CHEBI:30413"/>
    </cofactor>
</comment>
<comment type="pathway">
    <text evidence="8">Secondary metabolite biosynthesis.</text>
</comment>
<comment type="subcellular location">
    <subcellularLocation>
        <location evidence="2">Membrane</location>
        <topology evidence="2">Single-pass membrane protein</topology>
    </subcellularLocation>
</comment>
<comment type="similarity">
    <text evidence="7">Belongs to the cytochrome P450 family.</text>
</comment>